<comment type="function">
    <text>Inhibits trypsin.</text>
</comment>
<comment type="subcellular location">
    <subcellularLocation>
        <location>Secreted</location>
    </subcellularLocation>
</comment>
<comment type="domain">
    <text>The presence of a 'disulfide through disulfide knot' structurally defines this protein as a knottin.</text>
</comment>
<comment type="similarity">
    <text evidence="1">Belongs to the protease inhibitor I7 (squash-type serine protease inhibitor) family.</text>
</comment>
<keyword id="KW-0002">3D-structure</keyword>
<keyword id="KW-0903">Direct protein sequencing</keyword>
<keyword id="KW-1015">Disulfide bond</keyword>
<keyword id="KW-0960">Knottin</keyword>
<keyword id="KW-0646">Protease inhibitor</keyword>
<keyword id="KW-0964">Secreted</keyword>
<keyword id="KW-0722">Serine protease inhibitor</keyword>
<evidence type="ECO:0000305" key="1"/>
<evidence type="ECO:0007829" key="2">
    <source>
        <dbReference type="PDB" id="1W7Z"/>
    </source>
</evidence>
<evidence type="ECO:0007829" key="3">
    <source>
        <dbReference type="PDB" id="2C4B"/>
    </source>
</evidence>
<evidence type="ECO:0007829" key="4">
    <source>
        <dbReference type="PDB" id="2ETI"/>
    </source>
</evidence>
<accession>P12071</accession>
<proteinExistence type="evidence at protein level"/>
<reference key="1">
    <citation type="journal article" date="1989" name="Int. J. Pept. Protein Res.">
        <title>Protease inhibitors from Ecballium elaterium seeds.</title>
        <authorList>
            <person name="Favel A."/>
            <person name="Mattras H."/>
            <person name="Coletti-Previero M.-A."/>
            <person name="Zwilling R."/>
            <person name="Robinson E.A."/>
            <person name="Castro B."/>
        </authorList>
    </citation>
    <scope>PROTEIN SEQUENCE</scope>
    <source>
        <tissue>Seed</tissue>
    </source>
</reference>
<reference key="2">
    <citation type="journal article" date="1989" name="Proteins">
        <title>Use of restrained molecular dynamics in water to determine three-dimensional protein structure: prediction of the three-dimensional structure of Ecballium elaterium trypsin inhibitor II.</title>
        <authorList>
            <person name="Chiche L."/>
            <person name="Gaboriaud C."/>
            <person name="Heitz A."/>
            <person name="Mornon J.-P."/>
            <person name="Castro B."/>
            <person name="Kollman P.A."/>
        </authorList>
    </citation>
    <scope>STRUCTURE BY NMR</scope>
</reference>
<reference key="3">
    <citation type="journal article" date="1995" name="Eur. J. Biochem.">
        <title>Folding of the squash trypsin inhibitor EETI II. Evidence of native and non-native local structural preferences in a linear analogue.</title>
        <authorList>
            <person name="Heitz A."/>
            <person name="Chiche L."/>
            <person name="Castro B."/>
        </authorList>
    </citation>
    <scope>STRUCTURE BY NMR OF MUTANT WITH CYS REPLACED BY SER</scope>
</reference>
<name>ITR2_ECBEL</name>
<sequence length="30" mass="3089">GCPRILMRCKQDSDCLAGCVCGPNGFCGSP</sequence>
<feature type="peptide" id="PRO_0000044381" description="Trypsin inhibitor 2">
    <location>
        <begin position="1"/>
        <end position="30"/>
    </location>
</feature>
<feature type="site" description="Reactive bond">
    <location>
        <begin position="4"/>
        <end position="5"/>
    </location>
</feature>
<feature type="disulfide bond">
    <location>
        <begin position="2"/>
        <end position="19"/>
    </location>
</feature>
<feature type="disulfide bond">
    <location>
        <begin position="9"/>
        <end position="21"/>
    </location>
</feature>
<feature type="disulfide bond">
    <location>
        <begin position="15"/>
        <end position="27"/>
    </location>
</feature>
<feature type="strand" evidence="4">
    <location>
        <begin position="3"/>
        <end position="5"/>
    </location>
</feature>
<feature type="helix" evidence="2">
    <location>
        <begin position="12"/>
        <end position="14"/>
    </location>
</feature>
<feature type="strand" evidence="3">
    <location>
        <begin position="25"/>
        <end position="28"/>
    </location>
</feature>
<protein>
    <recommendedName>
        <fullName>Trypsin inhibitor 2</fullName>
    </recommendedName>
    <alternativeName>
        <fullName>EETI-II</fullName>
    </alternativeName>
    <alternativeName>
        <fullName>Trypsin inhibitor II</fullName>
    </alternativeName>
</protein>
<dbReference type="PIR" id="JQ1958">
    <property type="entry name" value="JQ1958"/>
</dbReference>
<dbReference type="PDB" id="1H9H">
    <property type="method" value="X-ray"/>
    <property type="resolution" value="1.50 A"/>
    <property type="chains" value="I=1-30"/>
</dbReference>
<dbReference type="PDB" id="1H9I">
    <property type="method" value="X-ray"/>
    <property type="resolution" value="1.90 A"/>
    <property type="chains" value="I=1-30"/>
</dbReference>
<dbReference type="PDB" id="1W7Z">
    <property type="method" value="X-ray"/>
    <property type="resolution" value="1.67 A"/>
    <property type="chains" value="A/B/C/D/E/F/G/H=1-30"/>
</dbReference>
<dbReference type="PDB" id="2C4B">
    <property type="method" value="X-ray"/>
    <property type="resolution" value="1.30 A"/>
    <property type="chains" value="A/B=16-29"/>
</dbReference>
<dbReference type="PDB" id="2ETI">
    <property type="method" value="NMR"/>
    <property type="chains" value="A=1-28"/>
</dbReference>
<dbReference type="PDB" id="2IT7">
    <property type="method" value="NMR"/>
    <property type="chains" value="A=1-28"/>
</dbReference>
<dbReference type="PDB" id="2LET">
    <property type="method" value="NMR"/>
    <property type="chains" value="A=1-28"/>
</dbReference>
<dbReference type="PDB" id="6MSL">
    <property type="method" value="X-ray"/>
    <property type="resolution" value="3.10 A"/>
    <property type="chains" value="C=9-28"/>
</dbReference>
<dbReference type="PDB" id="6MSU">
    <property type="method" value="X-ray"/>
    <property type="resolution" value="3.11 A"/>
    <property type="chains" value="C=2-28"/>
</dbReference>
<dbReference type="PDBsum" id="1H9H"/>
<dbReference type="PDBsum" id="1H9I"/>
<dbReference type="PDBsum" id="1W7Z"/>
<dbReference type="PDBsum" id="2C4B"/>
<dbReference type="PDBsum" id="2ETI"/>
<dbReference type="PDBsum" id="2IT7"/>
<dbReference type="PDBsum" id="2LET"/>
<dbReference type="PDBsum" id="6MSL"/>
<dbReference type="PDBsum" id="6MSU"/>
<dbReference type="BMRB" id="P12071"/>
<dbReference type="SMR" id="P12071"/>
<dbReference type="MEROPS" id="I07.003"/>
<dbReference type="EvolutionaryTrace" id="P12071"/>
<dbReference type="GO" id="GO:0005576">
    <property type="term" value="C:extracellular region"/>
    <property type="evidence" value="ECO:0007669"/>
    <property type="project" value="UniProtKB-SubCell"/>
</dbReference>
<dbReference type="GO" id="GO:0004867">
    <property type="term" value="F:serine-type endopeptidase inhibitor activity"/>
    <property type="evidence" value="ECO:0007669"/>
    <property type="project" value="UniProtKB-KW"/>
</dbReference>
<dbReference type="CDD" id="cd00150">
    <property type="entry name" value="PlantTI"/>
    <property type="match status" value="1"/>
</dbReference>
<dbReference type="Gene3D" id="4.10.75.20">
    <property type="match status" value="1"/>
</dbReference>
<dbReference type="InterPro" id="IPR000737">
    <property type="entry name" value="Prot_inh_squash"/>
</dbReference>
<dbReference type="InterPro" id="IPR011052">
    <property type="entry name" value="Proteinase_amylase_inhib_sf"/>
</dbReference>
<dbReference type="Pfam" id="PF00299">
    <property type="entry name" value="Squash"/>
    <property type="match status" value="1"/>
</dbReference>
<dbReference type="PRINTS" id="PR00293">
    <property type="entry name" value="SQUASHINHBTR"/>
</dbReference>
<dbReference type="SMART" id="SM00286">
    <property type="entry name" value="PTI"/>
    <property type="match status" value="1"/>
</dbReference>
<dbReference type="SUPFAM" id="SSF57027">
    <property type="entry name" value="Plant inhibitors of proteinases and amylases"/>
    <property type="match status" value="1"/>
</dbReference>
<dbReference type="PROSITE" id="PS00286">
    <property type="entry name" value="SQUASH_INHIBITOR"/>
    <property type="match status" value="1"/>
</dbReference>
<organism>
    <name type="scientific">Ecballium elaterium</name>
    <name type="common">Squirting cucumber</name>
    <name type="synonym">Momordica elaterium</name>
    <dbReference type="NCBI Taxonomy" id="3679"/>
    <lineage>
        <taxon>Eukaryota</taxon>
        <taxon>Viridiplantae</taxon>
        <taxon>Streptophyta</taxon>
        <taxon>Embryophyta</taxon>
        <taxon>Tracheophyta</taxon>
        <taxon>Spermatophyta</taxon>
        <taxon>Magnoliopsida</taxon>
        <taxon>eudicotyledons</taxon>
        <taxon>Gunneridae</taxon>
        <taxon>Pentapetalae</taxon>
        <taxon>rosids</taxon>
        <taxon>fabids</taxon>
        <taxon>Cucurbitales</taxon>
        <taxon>Cucurbitaceae</taxon>
        <taxon>Bryonieae</taxon>
        <taxon>Ecballium</taxon>
    </lineage>
</organism>